<comment type="function">
    <text evidence="6">Probable toxin.</text>
</comment>
<comment type="subcellular location">
    <subcellularLocation>
        <location evidence="4">Secreted</location>
    </subcellularLocation>
</comment>
<comment type="tissue specificity">
    <text evidence="7">Expressed by the venom duct.</text>
</comment>
<comment type="domain">
    <text evidence="6">The cysteine framework is VI/VII (C-C-CC-C-C).</text>
</comment>
<comment type="domain">
    <text evidence="1">Displays a mini-granulin fold, a structure composed of two short, stacked beta-hairpins connected by two parallel disulfide bonds. This newly described fold is derived from the same cysteine connectivity as knottins (ICK fold). The name 'mini-granulin fold' comes from the structural homology with the N-terminal region of the human granulin.</text>
</comment>
<comment type="similarity">
    <text evidence="6">Belongs to the conotoxin U superfamily.</text>
</comment>
<sequence length="68" mass="7740">MIRMGFFLTLTVAVLLTSLTCSEAVPTDKREMERLFDRILLKDQRQCPYCVVHCCPPSYCQASGCRPP</sequence>
<feature type="signal peptide" evidence="3">
    <location>
        <begin position="1"/>
        <end position="24"/>
    </location>
</feature>
<feature type="propeptide" id="PRO_0000454998" evidence="7">
    <location>
        <begin position="25"/>
        <end position="45"/>
    </location>
</feature>
<feature type="peptide" id="PRO_5016641381" description="Conotoxin Am6.8" evidence="4">
    <location>
        <begin position="46"/>
        <end position="68"/>
    </location>
</feature>
<feature type="modified residue" description="Pyrrolidone carboxylic acid" evidence="4">
    <location>
        <position position="46"/>
    </location>
</feature>
<feature type="disulfide bond" evidence="2">
    <location>
        <begin position="47"/>
        <end position="55"/>
    </location>
</feature>
<feature type="disulfide bond" evidence="2">
    <location>
        <begin position="50"/>
        <end position="60"/>
    </location>
</feature>
<feature type="disulfide bond" evidence="2">
    <location>
        <begin position="54"/>
        <end position="65"/>
    </location>
</feature>
<dbReference type="EMBL" id="MG917726">
    <property type="protein sequence ID" value="AXL93751.1"/>
    <property type="molecule type" value="mRNA"/>
</dbReference>
<dbReference type="GO" id="GO:0005576">
    <property type="term" value="C:extracellular region"/>
    <property type="evidence" value="ECO:0007669"/>
    <property type="project" value="UniProtKB-SubCell"/>
</dbReference>
<dbReference type="GO" id="GO:0090729">
    <property type="term" value="F:toxin activity"/>
    <property type="evidence" value="ECO:0007669"/>
    <property type="project" value="UniProtKB-KW"/>
</dbReference>
<keyword id="KW-0903">Direct protein sequencing</keyword>
<keyword id="KW-1015">Disulfide bond</keyword>
<keyword id="KW-0873">Pyrrolidone carboxylic acid</keyword>
<keyword id="KW-0964">Secreted</keyword>
<keyword id="KW-0732">Signal</keyword>
<keyword id="KW-0800">Toxin</keyword>
<name>CU68_CONAA</name>
<proteinExistence type="evidence at protein level"/>
<reference evidence="8" key="1">
    <citation type="journal article" date="2018" name="J. Proteome Res.">
        <title>Cone Snail Glutaminyl Cyclase Sequences from Transcriptomic Analysis and Mass Spectrometric Characterization of Two Pyroglutamyl Conotoxins.</title>
        <authorList>
            <person name="Vijayasarathy M."/>
            <person name="Basheer S.M."/>
            <person name="Balaram P."/>
        </authorList>
    </citation>
    <scope>NUCLEOTIDE SEQUENCE [MRNA]</scope>
    <scope>PROTEIN SEQUENCE OF 46-68</scope>
    <scope>PYROGLUTAMATE FORMATION AT GLN-46</scope>
    <scope>SUBCELLULAR LOCATION</scope>
    <source>
        <tissue>Venom</tissue>
        <tissue>Venom duct</tissue>
    </source>
</reference>
<accession>A0A346CED7</accession>
<protein>
    <recommendedName>
        <fullName evidence="6">Conotoxin Am6.8</fullName>
    </recommendedName>
    <alternativeName>
        <fullName evidence="5">Conotoxin Am2473</fullName>
    </alternativeName>
</protein>
<organism>
    <name type="scientific">Conus amadis</name>
    <name type="common">Amadis cone</name>
    <dbReference type="NCBI Taxonomy" id="198732"/>
    <lineage>
        <taxon>Eukaryota</taxon>
        <taxon>Metazoa</taxon>
        <taxon>Spiralia</taxon>
        <taxon>Lophotrochozoa</taxon>
        <taxon>Mollusca</taxon>
        <taxon>Gastropoda</taxon>
        <taxon>Caenogastropoda</taxon>
        <taxon>Neogastropoda</taxon>
        <taxon>Conoidea</taxon>
        <taxon>Conidae</taxon>
        <taxon>Conus</taxon>
        <taxon>Leptoconus</taxon>
    </lineage>
</organism>
<evidence type="ECO:0000250" key="1">
    <source>
        <dbReference type="UniProtKB" id="P0DPM3"/>
    </source>
</evidence>
<evidence type="ECO:0000250" key="2">
    <source>
        <dbReference type="UniProtKB" id="Q26443"/>
    </source>
</evidence>
<evidence type="ECO:0000255" key="3"/>
<evidence type="ECO:0000269" key="4">
    <source>
    </source>
</evidence>
<evidence type="ECO:0000303" key="5">
    <source>
    </source>
</evidence>
<evidence type="ECO:0000305" key="6"/>
<evidence type="ECO:0000305" key="7">
    <source>
    </source>
</evidence>
<evidence type="ECO:0000312" key="8">
    <source>
        <dbReference type="EMBL" id="AXL93751.1"/>
    </source>
</evidence>